<name>CC116_RAT</name>
<protein>
    <recommendedName>
        <fullName>Coiled-coil domain-containing protein 116</fullName>
    </recommendedName>
</protein>
<feature type="chain" id="PRO_0000254055" description="Coiled-coil domain-containing protein 116">
    <location>
        <begin position="1"/>
        <end position="540"/>
    </location>
</feature>
<feature type="region of interest" description="Disordered" evidence="3">
    <location>
        <begin position="347"/>
        <end position="400"/>
    </location>
</feature>
<feature type="coiled-coil region" evidence="2">
    <location>
        <begin position="79"/>
        <end position="102"/>
    </location>
</feature>
<feature type="compositionally biased region" description="Polar residues" evidence="3">
    <location>
        <begin position="350"/>
        <end position="359"/>
    </location>
</feature>
<feature type="compositionally biased region" description="Polar residues" evidence="3">
    <location>
        <begin position="372"/>
        <end position="381"/>
    </location>
</feature>
<feature type="modified residue" description="Phosphoserine" evidence="4">
    <location>
        <position position="393"/>
    </location>
</feature>
<organism>
    <name type="scientific">Rattus norvegicus</name>
    <name type="common">Rat</name>
    <dbReference type="NCBI Taxonomy" id="10116"/>
    <lineage>
        <taxon>Eukaryota</taxon>
        <taxon>Metazoa</taxon>
        <taxon>Chordata</taxon>
        <taxon>Craniata</taxon>
        <taxon>Vertebrata</taxon>
        <taxon>Euteleostomi</taxon>
        <taxon>Mammalia</taxon>
        <taxon>Eutheria</taxon>
        <taxon>Euarchontoglires</taxon>
        <taxon>Glires</taxon>
        <taxon>Rodentia</taxon>
        <taxon>Myomorpha</taxon>
        <taxon>Muroidea</taxon>
        <taxon>Muridae</taxon>
        <taxon>Murinae</taxon>
        <taxon>Rattus</taxon>
    </lineage>
</organism>
<accession>Q4V8B5</accession>
<dbReference type="EMBL" id="BC097459">
    <property type="protein sequence ID" value="AAH97459.1"/>
    <property type="molecule type" value="mRNA"/>
</dbReference>
<dbReference type="RefSeq" id="NP_001019911.1">
    <property type="nucleotide sequence ID" value="NM_001024740.1"/>
</dbReference>
<dbReference type="RefSeq" id="XP_006248738.1">
    <property type="nucleotide sequence ID" value="XM_006248676.3"/>
</dbReference>
<dbReference type="SMR" id="Q4V8B5"/>
<dbReference type="FunCoup" id="Q4V8B5">
    <property type="interactions" value="65"/>
</dbReference>
<dbReference type="IntAct" id="Q4V8B5">
    <property type="interactions" value="1"/>
</dbReference>
<dbReference type="STRING" id="10116.ENSRNOP00000040746"/>
<dbReference type="iPTMnet" id="Q4V8B5"/>
<dbReference type="PhosphoSitePlus" id="Q4V8B5"/>
<dbReference type="PaxDb" id="10116-ENSRNOP00000040746"/>
<dbReference type="GeneID" id="287936"/>
<dbReference type="KEGG" id="rno:287936"/>
<dbReference type="AGR" id="RGD:1310080"/>
<dbReference type="CTD" id="164592"/>
<dbReference type="RGD" id="1310080">
    <property type="gene designation" value="Ccdc116"/>
</dbReference>
<dbReference type="VEuPathDB" id="HostDB:ENSRNOG00000001860"/>
<dbReference type="eggNOG" id="ENOG502STQK">
    <property type="taxonomic scope" value="Eukaryota"/>
</dbReference>
<dbReference type="HOGENOM" id="CLU_022190_1_0_1"/>
<dbReference type="InParanoid" id="Q4V8B5"/>
<dbReference type="OrthoDB" id="9837963at2759"/>
<dbReference type="PhylomeDB" id="Q4V8B5"/>
<dbReference type="TreeFam" id="TF337163"/>
<dbReference type="PRO" id="PR:Q4V8B5"/>
<dbReference type="Proteomes" id="UP000002494">
    <property type="component" value="Chromosome 11"/>
</dbReference>
<dbReference type="Bgee" id="ENSRNOG00000001860">
    <property type="expression patterns" value="Expressed in testis and 3 other cell types or tissues"/>
</dbReference>
<dbReference type="GO" id="GO:0005813">
    <property type="term" value="C:centrosome"/>
    <property type="evidence" value="ECO:0000250"/>
    <property type="project" value="UniProtKB"/>
</dbReference>
<dbReference type="GO" id="GO:0005737">
    <property type="term" value="C:cytoplasm"/>
    <property type="evidence" value="ECO:0007669"/>
    <property type="project" value="UniProtKB-KW"/>
</dbReference>
<dbReference type="InterPro" id="IPR031532">
    <property type="entry name" value="DUF4702"/>
</dbReference>
<dbReference type="PANTHER" id="PTHR36861">
    <property type="entry name" value="COILED-COIL DOMAIN-CONTAINING PROTEIN 116"/>
    <property type="match status" value="1"/>
</dbReference>
<dbReference type="PANTHER" id="PTHR36861:SF1">
    <property type="entry name" value="COILED-COIL DOMAIN-CONTAINING PROTEIN 116"/>
    <property type="match status" value="1"/>
</dbReference>
<dbReference type="Pfam" id="PF15774">
    <property type="entry name" value="DUF4702"/>
    <property type="match status" value="1"/>
</dbReference>
<sequence>MARCRHHSGYLADDEAAHGTYVARLPKKHLLPEMRPTCKLGRVPHLPSMNRYSERQGHQQNLRRPRAFGGFLDFLTEGQVLDSLQTVVEQATECVATMKTEAGVPLVDVQDRVEVPNSRHRSRGRPSINTVHRHRARPTLCAGHPNNYPSCSSSMSDSHSSVTAGWLGSRSQDSDLGARGVGSLPPMRDKLLLEKNLKRLLRLESKGKVLNQHCSQRDSLLWDSLGSQSSSQPTREQPLSWFSGLLASTSVTPETSELGLGEQEMIFLKQELNKEIKSLLNQPTSFNLPTYCPLREPHRTLDFLSEHHLFPALQRVVSQAVDKLSHACRHNGFPLFPVTSELSPVFPGNSDLQPSSKASLPTDREARGETCYSPTSASSPKTSHRKSKDRRGSPSNAVQMATRFRLKVTPTEVSNVPIPSSQCMLKSPNSDLKLQKQTTASNHNHIPQPRHGLHLTLPAPGITVEVASCQGQLRGQVQHSLATPCHLHSHFPFPVFSPFLPLGKSFSTSPPTLCPEVSSRAGLEVLEGHLKGRGCFTHHF</sequence>
<gene>
    <name type="primary">Ccdc116</name>
</gene>
<evidence type="ECO:0000250" key="1">
    <source>
        <dbReference type="UniProtKB" id="Q8IYX3"/>
    </source>
</evidence>
<evidence type="ECO:0000255" key="2"/>
<evidence type="ECO:0000256" key="3">
    <source>
        <dbReference type="SAM" id="MobiDB-lite"/>
    </source>
</evidence>
<evidence type="ECO:0007744" key="4">
    <source>
    </source>
</evidence>
<proteinExistence type="evidence at protein level"/>
<reference key="1">
    <citation type="journal article" date="2004" name="Genome Res.">
        <title>The status, quality, and expansion of the NIH full-length cDNA project: the Mammalian Gene Collection (MGC).</title>
        <authorList>
            <consortium name="The MGC Project Team"/>
        </authorList>
    </citation>
    <scope>NUCLEOTIDE SEQUENCE [LARGE SCALE MRNA]</scope>
    <source>
        <tissue>Testis</tissue>
    </source>
</reference>
<reference key="2">
    <citation type="journal article" date="2012" name="Nat. Commun.">
        <title>Quantitative maps of protein phosphorylation sites across 14 different rat organs and tissues.</title>
        <authorList>
            <person name="Lundby A."/>
            <person name="Secher A."/>
            <person name="Lage K."/>
            <person name="Nordsborg N.B."/>
            <person name="Dmytriyev A."/>
            <person name="Lundby C."/>
            <person name="Olsen J.V."/>
        </authorList>
    </citation>
    <scope>PHOSPHORYLATION [LARGE SCALE ANALYSIS] AT SER-393</scope>
    <scope>IDENTIFICATION BY MASS SPECTROMETRY [LARGE SCALE ANALYSIS]</scope>
</reference>
<keyword id="KW-0175">Coiled coil</keyword>
<keyword id="KW-0963">Cytoplasm</keyword>
<keyword id="KW-0206">Cytoskeleton</keyword>
<keyword id="KW-0597">Phosphoprotein</keyword>
<keyword id="KW-1185">Reference proteome</keyword>
<comment type="subcellular location">
    <subcellularLocation>
        <location evidence="1">Cytoplasm</location>
        <location evidence="1">Cytoskeleton</location>
        <location evidence="1">Microtubule organizing center</location>
        <location evidence="1">Centrosome</location>
    </subcellularLocation>
</comment>